<accession>A0QWR5</accession>
<accession>I7FD60</accession>
<organism>
    <name type="scientific">Mycolicibacterium smegmatis (strain ATCC 700084 / mc(2)155)</name>
    <name type="common">Mycobacterium smegmatis</name>
    <dbReference type="NCBI Taxonomy" id="246196"/>
    <lineage>
        <taxon>Bacteria</taxon>
        <taxon>Bacillati</taxon>
        <taxon>Actinomycetota</taxon>
        <taxon>Actinomycetes</taxon>
        <taxon>Mycobacteriales</taxon>
        <taxon>Mycobacteriaceae</taxon>
        <taxon>Mycolicibacterium</taxon>
    </lineage>
</organism>
<sequence>MPDRRGDRGRHQARKRAVDLLFEAEARGLTAEAVADSRAALAEDQDDVAPLNPYTVLVARGVTEHAAHIDDLISAHLQGWTLERLPAVDRAILRVAVWELLHAEDVPEPVAVDEAVELAKELSTDESPGFVNGVLGQVMLVTPQIRAASQAVRGTGPAEG</sequence>
<dbReference type="EMBL" id="CP000480">
    <property type="protein sequence ID" value="ABK72859.1"/>
    <property type="molecule type" value="Genomic_DNA"/>
</dbReference>
<dbReference type="EMBL" id="CP001663">
    <property type="protein sequence ID" value="AFP39425.1"/>
    <property type="molecule type" value="Genomic_DNA"/>
</dbReference>
<dbReference type="RefSeq" id="WP_011728771.1">
    <property type="nucleotide sequence ID" value="NZ_SIJM01000002.1"/>
</dbReference>
<dbReference type="RefSeq" id="YP_887353.1">
    <property type="nucleotide sequence ID" value="NC_008596.1"/>
</dbReference>
<dbReference type="SMR" id="A0QWR5"/>
<dbReference type="STRING" id="246196.MSMEG_3036"/>
<dbReference type="PaxDb" id="246196-MSMEI_2961"/>
<dbReference type="GeneID" id="93457815"/>
<dbReference type="KEGG" id="msb:LJ00_15110"/>
<dbReference type="KEGG" id="msg:MSMEI_2961"/>
<dbReference type="KEGG" id="msm:MSMEG_3036"/>
<dbReference type="PATRIC" id="fig|246196.19.peg.2998"/>
<dbReference type="eggNOG" id="COG0781">
    <property type="taxonomic scope" value="Bacteria"/>
</dbReference>
<dbReference type="OrthoDB" id="3528057at2"/>
<dbReference type="Proteomes" id="UP000000757">
    <property type="component" value="Chromosome"/>
</dbReference>
<dbReference type="Proteomes" id="UP000006158">
    <property type="component" value="Chromosome"/>
</dbReference>
<dbReference type="GO" id="GO:0005829">
    <property type="term" value="C:cytosol"/>
    <property type="evidence" value="ECO:0007669"/>
    <property type="project" value="TreeGrafter"/>
</dbReference>
<dbReference type="GO" id="GO:0003723">
    <property type="term" value="F:RNA binding"/>
    <property type="evidence" value="ECO:0007669"/>
    <property type="project" value="UniProtKB-UniRule"/>
</dbReference>
<dbReference type="GO" id="GO:0006353">
    <property type="term" value="P:DNA-templated transcription termination"/>
    <property type="evidence" value="ECO:0007669"/>
    <property type="project" value="UniProtKB-UniRule"/>
</dbReference>
<dbReference type="GO" id="GO:0031564">
    <property type="term" value="P:transcription antitermination"/>
    <property type="evidence" value="ECO:0007669"/>
    <property type="project" value="UniProtKB-KW"/>
</dbReference>
<dbReference type="CDD" id="cd00619">
    <property type="entry name" value="Terminator_NusB"/>
    <property type="match status" value="1"/>
</dbReference>
<dbReference type="Gene3D" id="1.10.940.10">
    <property type="entry name" value="NusB-like"/>
    <property type="match status" value="1"/>
</dbReference>
<dbReference type="HAMAP" id="MF_00073">
    <property type="entry name" value="NusB"/>
    <property type="match status" value="1"/>
</dbReference>
<dbReference type="InterPro" id="IPR035926">
    <property type="entry name" value="NusB-like_sf"/>
</dbReference>
<dbReference type="InterPro" id="IPR011605">
    <property type="entry name" value="NusB_fam"/>
</dbReference>
<dbReference type="InterPro" id="IPR006027">
    <property type="entry name" value="NusB_RsmB_TIM44"/>
</dbReference>
<dbReference type="NCBIfam" id="TIGR01951">
    <property type="entry name" value="nusB"/>
    <property type="match status" value="1"/>
</dbReference>
<dbReference type="PANTHER" id="PTHR11078:SF3">
    <property type="entry name" value="ANTITERMINATION NUSB DOMAIN-CONTAINING PROTEIN"/>
    <property type="match status" value="1"/>
</dbReference>
<dbReference type="PANTHER" id="PTHR11078">
    <property type="entry name" value="N UTILIZATION SUBSTANCE PROTEIN B-RELATED"/>
    <property type="match status" value="1"/>
</dbReference>
<dbReference type="Pfam" id="PF01029">
    <property type="entry name" value="NusB"/>
    <property type="match status" value="1"/>
</dbReference>
<dbReference type="SUPFAM" id="SSF48013">
    <property type="entry name" value="NusB-like"/>
    <property type="match status" value="1"/>
</dbReference>
<reference key="1">
    <citation type="submission" date="2006-10" db="EMBL/GenBank/DDBJ databases">
        <authorList>
            <person name="Fleischmann R.D."/>
            <person name="Dodson R.J."/>
            <person name="Haft D.H."/>
            <person name="Merkel J.S."/>
            <person name="Nelson W.C."/>
            <person name="Fraser C.M."/>
        </authorList>
    </citation>
    <scope>NUCLEOTIDE SEQUENCE [LARGE SCALE GENOMIC DNA]</scope>
    <source>
        <strain>ATCC 700084 / mc(2)155</strain>
    </source>
</reference>
<reference key="2">
    <citation type="journal article" date="2007" name="Genome Biol.">
        <title>Interrupted coding sequences in Mycobacterium smegmatis: authentic mutations or sequencing errors?</title>
        <authorList>
            <person name="Deshayes C."/>
            <person name="Perrodou E."/>
            <person name="Gallien S."/>
            <person name="Euphrasie D."/>
            <person name="Schaeffer C."/>
            <person name="Van-Dorsselaer A."/>
            <person name="Poch O."/>
            <person name="Lecompte O."/>
            <person name="Reyrat J.-M."/>
        </authorList>
    </citation>
    <scope>NUCLEOTIDE SEQUENCE [LARGE SCALE GENOMIC DNA]</scope>
    <source>
        <strain>ATCC 700084 / mc(2)155</strain>
    </source>
</reference>
<reference key="3">
    <citation type="journal article" date="2009" name="Genome Res.">
        <title>Ortho-proteogenomics: multiple proteomes investigation through orthology and a new MS-based protocol.</title>
        <authorList>
            <person name="Gallien S."/>
            <person name="Perrodou E."/>
            <person name="Carapito C."/>
            <person name="Deshayes C."/>
            <person name="Reyrat J.-M."/>
            <person name="Van Dorsselaer A."/>
            <person name="Poch O."/>
            <person name="Schaeffer C."/>
            <person name="Lecompte O."/>
        </authorList>
    </citation>
    <scope>NUCLEOTIDE SEQUENCE [LARGE SCALE GENOMIC DNA]</scope>
    <source>
        <strain>ATCC 700084 / mc(2)155</strain>
    </source>
</reference>
<gene>
    <name evidence="1" type="primary">nusB</name>
    <name type="ordered locus">MSMEG_3036</name>
    <name type="ordered locus">MSMEI_2961</name>
</gene>
<feature type="chain" id="PRO_1000023749" description="Transcription antitermination protein NusB">
    <location>
        <begin position="1"/>
        <end position="160"/>
    </location>
</feature>
<proteinExistence type="inferred from homology"/>
<comment type="function">
    <text evidence="1">Involved in transcription antitermination. Required for transcription of ribosomal RNA (rRNA) genes. Binds specifically to the boxA antiterminator sequence of the ribosomal RNA (rrn) operons.</text>
</comment>
<comment type="similarity">
    <text evidence="1">Belongs to the NusB family.</text>
</comment>
<name>NUSB_MYCS2</name>
<keyword id="KW-1185">Reference proteome</keyword>
<keyword id="KW-0694">RNA-binding</keyword>
<keyword id="KW-0804">Transcription</keyword>
<keyword id="KW-0889">Transcription antitermination</keyword>
<keyword id="KW-0805">Transcription regulation</keyword>
<protein>
    <recommendedName>
        <fullName evidence="1">Transcription antitermination protein NusB</fullName>
    </recommendedName>
    <alternativeName>
        <fullName evidence="1">Antitermination factor NusB</fullName>
    </alternativeName>
</protein>
<evidence type="ECO:0000255" key="1">
    <source>
        <dbReference type="HAMAP-Rule" id="MF_00073"/>
    </source>
</evidence>